<reference key="1">
    <citation type="journal article" date="2009" name="PLoS Genet.">
        <title>Organised genome dynamics in the Escherichia coli species results in highly diverse adaptive paths.</title>
        <authorList>
            <person name="Touchon M."/>
            <person name="Hoede C."/>
            <person name="Tenaillon O."/>
            <person name="Barbe V."/>
            <person name="Baeriswyl S."/>
            <person name="Bidet P."/>
            <person name="Bingen E."/>
            <person name="Bonacorsi S."/>
            <person name="Bouchier C."/>
            <person name="Bouvet O."/>
            <person name="Calteau A."/>
            <person name="Chiapello H."/>
            <person name="Clermont O."/>
            <person name="Cruveiller S."/>
            <person name="Danchin A."/>
            <person name="Diard M."/>
            <person name="Dossat C."/>
            <person name="Karoui M.E."/>
            <person name="Frapy E."/>
            <person name="Garry L."/>
            <person name="Ghigo J.M."/>
            <person name="Gilles A.M."/>
            <person name="Johnson J."/>
            <person name="Le Bouguenec C."/>
            <person name="Lescat M."/>
            <person name="Mangenot S."/>
            <person name="Martinez-Jehanne V."/>
            <person name="Matic I."/>
            <person name="Nassif X."/>
            <person name="Oztas S."/>
            <person name="Petit M.A."/>
            <person name="Pichon C."/>
            <person name="Rouy Z."/>
            <person name="Ruf C.S."/>
            <person name="Schneider D."/>
            <person name="Tourret J."/>
            <person name="Vacherie B."/>
            <person name="Vallenet D."/>
            <person name="Medigue C."/>
            <person name="Rocha E.P.C."/>
            <person name="Denamur E."/>
        </authorList>
    </citation>
    <scope>NUCLEOTIDE SEQUENCE [LARGE SCALE GENOMIC DNA]</scope>
    <source>
        <strain>ATCC 35469 / DSM 13698 / BCRC 15582 / CCUG 18766 / IAM 14443 / JCM 21226 / LMG 7866 / NBRC 102419 / NCTC 12128 / CDC 0568-73</strain>
    </source>
</reference>
<evidence type="ECO:0000255" key="1">
    <source>
        <dbReference type="HAMAP-Rule" id="MF_01173"/>
    </source>
</evidence>
<comment type="function">
    <text evidence="1">Catalyzes the transamination of N(2)-succinylornithine and alpha-ketoglutarate into N(2)-succinylglutamate semialdehyde and glutamate. Can also act as an acetylornithine aminotransferase.</text>
</comment>
<comment type="catalytic activity">
    <reaction evidence="1">
        <text>N(2)-succinyl-L-ornithine + 2-oxoglutarate = N-succinyl-L-glutamate 5-semialdehyde + L-glutamate</text>
        <dbReference type="Rhea" id="RHEA:16953"/>
        <dbReference type="ChEBI" id="CHEBI:16810"/>
        <dbReference type="ChEBI" id="CHEBI:29985"/>
        <dbReference type="ChEBI" id="CHEBI:58514"/>
        <dbReference type="ChEBI" id="CHEBI:58520"/>
        <dbReference type="EC" id="2.6.1.81"/>
    </reaction>
</comment>
<comment type="cofactor">
    <cofactor evidence="1">
        <name>pyridoxal 5'-phosphate</name>
        <dbReference type="ChEBI" id="CHEBI:597326"/>
    </cofactor>
</comment>
<comment type="pathway">
    <text evidence="1">Amino-acid degradation; L-arginine degradation via AST pathway; L-glutamate and succinate from L-arginine: step 3/5.</text>
</comment>
<comment type="similarity">
    <text evidence="1">Belongs to the class-III pyridoxal-phosphate-dependent aminotransferase family. AstC subfamily.</text>
</comment>
<sequence>MSQPITRENFDEWMLPVYAPAPFIPVRGEGSRLWDQQGKEYIDFAGGIAVNALGHAHPELREALNEQASKFWHTGNGYTNEPVLRLAKKLIDATFADRVFFCNSGAEANEAALKLARKFAHDRYGSHKSGIVAFKNAFHGRTLFTVSAGGQPAYSQDFAPLPPDIRHAAYNDLNSASALIDDSTCAVIVEPIQGEGGVVPASNAFLQGLRELCDRHNALLIFDEVQTGVGRTGELYAYMHYGVTPDLLTTAKALGGGFPVGALLATEECASVMTVGTHGTTYGGNPLASAVAGKVLDLINTPEMLIGVKQRHDWFVERLNTINHRYGLFSEVRGLGLLIGCVLNADYAGQAKQISQEAAKAGVMVLIAGGNVVRFAPALNVSEEEVTTGLDRFAVACERFVSGGSS</sequence>
<feature type="chain" id="PRO_1000164388" description="Succinylornithine transaminase">
    <location>
        <begin position="1"/>
        <end position="406"/>
    </location>
</feature>
<feature type="modified residue" description="N6-(pyridoxal phosphate)lysine" evidence="1">
    <location>
        <position position="252"/>
    </location>
</feature>
<protein>
    <recommendedName>
        <fullName evidence="1">Succinylornithine transaminase</fullName>
        <ecNumber evidence="1">2.6.1.81</ecNumber>
    </recommendedName>
    <alternativeName>
        <fullName evidence="1">Succinylornithine aminotransferase</fullName>
    </alternativeName>
</protein>
<keyword id="KW-0032">Aminotransferase</keyword>
<keyword id="KW-0056">Arginine metabolism</keyword>
<keyword id="KW-0663">Pyridoxal phosphate</keyword>
<keyword id="KW-0808">Transferase</keyword>
<accession>B7LQ44</accession>
<organism>
    <name type="scientific">Escherichia fergusonii (strain ATCC 35469 / DSM 13698 / CCUG 18766 / IAM 14443 / JCM 21226 / LMG 7866 / NBRC 102419 / NCTC 12128 / CDC 0568-73)</name>
    <dbReference type="NCBI Taxonomy" id="585054"/>
    <lineage>
        <taxon>Bacteria</taxon>
        <taxon>Pseudomonadati</taxon>
        <taxon>Pseudomonadota</taxon>
        <taxon>Gammaproteobacteria</taxon>
        <taxon>Enterobacterales</taxon>
        <taxon>Enterobacteriaceae</taxon>
        <taxon>Escherichia</taxon>
    </lineage>
</organism>
<name>ASTC_ESCF3</name>
<proteinExistence type="inferred from homology"/>
<gene>
    <name evidence="1" type="primary">astC</name>
    <name evidence="1" type="synonym">argM</name>
    <name type="ordered locus">EFER_1317</name>
</gene>
<dbReference type="EC" id="2.6.1.81" evidence="1"/>
<dbReference type="EMBL" id="CU928158">
    <property type="protein sequence ID" value="CAQ88841.1"/>
    <property type="molecule type" value="Genomic_DNA"/>
</dbReference>
<dbReference type="RefSeq" id="WP_000082035.1">
    <property type="nucleotide sequence ID" value="NC_011740.1"/>
</dbReference>
<dbReference type="SMR" id="B7LQ44"/>
<dbReference type="GeneID" id="75057639"/>
<dbReference type="KEGG" id="efe:EFER_1317"/>
<dbReference type="HOGENOM" id="CLU_016922_10_1_6"/>
<dbReference type="OrthoDB" id="9801052at2"/>
<dbReference type="UniPathway" id="UPA00185">
    <property type="reaction ID" value="UER00281"/>
</dbReference>
<dbReference type="Proteomes" id="UP000000745">
    <property type="component" value="Chromosome"/>
</dbReference>
<dbReference type="GO" id="GO:0042802">
    <property type="term" value="F:identical protein binding"/>
    <property type="evidence" value="ECO:0007669"/>
    <property type="project" value="TreeGrafter"/>
</dbReference>
<dbReference type="GO" id="GO:0030170">
    <property type="term" value="F:pyridoxal phosphate binding"/>
    <property type="evidence" value="ECO:0007669"/>
    <property type="project" value="UniProtKB-UniRule"/>
</dbReference>
<dbReference type="GO" id="GO:0043825">
    <property type="term" value="F:succinylornithine transaminase activity"/>
    <property type="evidence" value="ECO:0007669"/>
    <property type="project" value="UniProtKB-EC"/>
</dbReference>
<dbReference type="GO" id="GO:1901607">
    <property type="term" value="P:alpha-amino acid biosynthetic process"/>
    <property type="evidence" value="ECO:0007669"/>
    <property type="project" value="UniProtKB-ARBA"/>
</dbReference>
<dbReference type="GO" id="GO:0019544">
    <property type="term" value="P:arginine catabolic process to glutamate"/>
    <property type="evidence" value="ECO:0007669"/>
    <property type="project" value="UniProtKB-UniRule"/>
</dbReference>
<dbReference type="GO" id="GO:0019545">
    <property type="term" value="P:arginine catabolic process to succinate"/>
    <property type="evidence" value="ECO:0007669"/>
    <property type="project" value="UniProtKB-UniRule"/>
</dbReference>
<dbReference type="GO" id="GO:0006593">
    <property type="term" value="P:ornithine catabolic process"/>
    <property type="evidence" value="ECO:0007669"/>
    <property type="project" value="InterPro"/>
</dbReference>
<dbReference type="CDD" id="cd00610">
    <property type="entry name" value="OAT_like"/>
    <property type="match status" value="1"/>
</dbReference>
<dbReference type="FunFam" id="3.40.640.10:FF:000004">
    <property type="entry name" value="Acetylornithine aminotransferase"/>
    <property type="match status" value="1"/>
</dbReference>
<dbReference type="FunFam" id="3.90.1150.10:FF:000009">
    <property type="entry name" value="Succinylornithine transaminase"/>
    <property type="match status" value="1"/>
</dbReference>
<dbReference type="Gene3D" id="3.90.1150.10">
    <property type="entry name" value="Aspartate Aminotransferase, domain 1"/>
    <property type="match status" value="1"/>
</dbReference>
<dbReference type="Gene3D" id="3.40.640.10">
    <property type="entry name" value="Type I PLP-dependent aspartate aminotransferase-like (Major domain)"/>
    <property type="match status" value="1"/>
</dbReference>
<dbReference type="HAMAP" id="MF_01107">
    <property type="entry name" value="ArgD_aminotrans_3"/>
    <property type="match status" value="1"/>
</dbReference>
<dbReference type="HAMAP" id="MF_01173">
    <property type="entry name" value="AstC_aminotrans_3"/>
    <property type="match status" value="1"/>
</dbReference>
<dbReference type="InterPro" id="IPR017652">
    <property type="entry name" value="Ac/SucOrn_transaminase_bac"/>
</dbReference>
<dbReference type="InterPro" id="IPR004636">
    <property type="entry name" value="AcOrn/SuccOrn_fam"/>
</dbReference>
<dbReference type="InterPro" id="IPR005814">
    <property type="entry name" value="Aminotrans_3"/>
</dbReference>
<dbReference type="InterPro" id="IPR049704">
    <property type="entry name" value="Aminotrans_3_PPA_site"/>
</dbReference>
<dbReference type="InterPro" id="IPR050103">
    <property type="entry name" value="Class-III_PLP-dep_AT"/>
</dbReference>
<dbReference type="InterPro" id="IPR015424">
    <property type="entry name" value="PyrdxlP-dep_Trfase"/>
</dbReference>
<dbReference type="InterPro" id="IPR015421">
    <property type="entry name" value="PyrdxlP-dep_Trfase_major"/>
</dbReference>
<dbReference type="InterPro" id="IPR015422">
    <property type="entry name" value="PyrdxlP-dep_Trfase_small"/>
</dbReference>
<dbReference type="InterPro" id="IPR026330">
    <property type="entry name" value="SOAT"/>
</dbReference>
<dbReference type="NCBIfam" id="TIGR03246">
    <property type="entry name" value="arg_catab_astC"/>
    <property type="match status" value="1"/>
</dbReference>
<dbReference type="NCBIfam" id="TIGR00707">
    <property type="entry name" value="argD"/>
    <property type="match status" value="1"/>
</dbReference>
<dbReference type="NCBIfam" id="NF002325">
    <property type="entry name" value="PRK01278.1"/>
    <property type="match status" value="1"/>
</dbReference>
<dbReference type="NCBIfam" id="NF003468">
    <property type="entry name" value="PRK05093.1"/>
    <property type="match status" value="1"/>
</dbReference>
<dbReference type="NCBIfam" id="NF009047">
    <property type="entry name" value="PRK12381.1"/>
    <property type="match status" value="1"/>
</dbReference>
<dbReference type="PANTHER" id="PTHR11986">
    <property type="entry name" value="AMINOTRANSFERASE CLASS III"/>
    <property type="match status" value="1"/>
</dbReference>
<dbReference type="PANTHER" id="PTHR11986:SF113">
    <property type="entry name" value="SUCCINYLORNITHINE TRANSAMINASE"/>
    <property type="match status" value="1"/>
</dbReference>
<dbReference type="Pfam" id="PF00202">
    <property type="entry name" value="Aminotran_3"/>
    <property type="match status" value="1"/>
</dbReference>
<dbReference type="PIRSF" id="PIRSF000521">
    <property type="entry name" value="Transaminase_4ab_Lys_Orn"/>
    <property type="match status" value="1"/>
</dbReference>
<dbReference type="SUPFAM" id="SSF53383">
    <property type="entry name" value="PLP-dependent transferases"/>
    <property type="match status" value="1"/>
</dbReference>
<dbReference type="PROSITE" id="PS00600">
    <property type="entry name" value="AA_TRANSFER_CLASS_3"/>
    <property type="match status" value="1"/>
</dbReference>